<keyword id="KW-0001">2Fe-2S</keyword>
<keyword id="KW-0004">4Fe-4S</keyword>
<keyword id="KW-0093">Biotin biosynthesis</keyword>
<keyword id="KW-0408">Iron</keyword>
<keyword id="KW-0411">Iron-sulfur</keyword>
<keyword id="KW-0479">Metal-binding</keyword>
<keyword id="KW-1185">Reference proteome</keyword>
<keyword id="KW-0949">S-adenosyl-L-methionine</keyword>
<keyword id="KW-0808">Transferase</keyword>
<proteinExistence type="inferred from homology"/>
<organism>
    <name type="scientific">Nitratidesulfovibrio vulgaris (strain ATCC 29579 / DSM 644 / CCUG 34227 / NCIMB 8303 / VKM B-1760 / Hildenborough)</name>
    <name type="common">Desulfovibrio vulgaris</name>
    <dbReference type="NCBI Taxonomy" id="882"/>
    <lineage>
        <taxon>Bacteria</taxon>
        <taxon>Pseudomonadati</taxon>
        <taxon>Thermodesulfobacteriota</taxon>
        <taxon>Desulfovibrionia</taxon>
        <taxon>Desulfovibrionales</taxon>
        <taxon>Desulfovibrionaceae</taxon>
        <taxon>Nitratidesulfovibrio</taxon>
    </lineage>
</organism>
<feature type="chain" id="PRO_0000381351" description="Biotin synthase">
    <location>
        <begin position="1"/>
        <end position="362"/>
    </location>
</feature>
<feature type="domain" description="Radical SAM core" evidence="2">
    <location>
        <begin position="87"/>
        <end position="316"/>
    </location>
</feature>
<feature type="region of interest" description="Disordered" evidence="3">
    <location>
        <begin position="14"/>
        <end position="39"/>
    </location>
</feature>
<feature type="binding site" evidence="1">
    <location>
        <position position="105"/>
    </location>
    <ligand>
        <name>[4Fe-4S] cluster</name>
        <dbReference type="ChEBI" id="CHEBI:49883"/>
        <note>4Fe-4S-S-AdoMet</note>
    </ligand>
</feature>
<feature type="binding site" evidence="1">
    <location>
        <position position="109"/>
    </location>
    <ligand>
        <name>[4Fe-4S] cluster</name>
        <dbReference type="ChEBI" id="CHEBI:49883"/>
        <note>4Fe-4S-S-AdoMet</note>
    </ligand>
</feature>
<feature type="binding site" evidence="1">
    <location>
        <position position="112"/>
    </location>
    <ligand>
        <name>[4Fe-4S] cluster</name>
        <dbReference type="ChEBI" id="CHEBI:49883"/>
        <note>4Fe-4S-S-AdoMet</note>
    </ligand>
</feature>
<feature type="binding site" evidence="1">
    <location>
        <position position="181"/>
    </location>
    <ligand>
        <name>[2Fe-2S] cluster</name>
        <dbReference type="ChEBI" id="CHEBI:190135"/>
    </ligand>
</feature>
<feature type="binding site" evidence="1">
    <location>
        <position position="241"/>
    </location>
    <ligand>
        <name>[2Fe-2S] cluster</name>
        <dbReference type="ChEBI" id="CHEBI:190135"/>
    </ligand>
</feature>
<protein>
    <recommendedName>
        <fullName evidence="1">Biotin synthase</fullName>
        <ecNumber evidence="1">2.8.1.6</ecNumber>
    </recommendedName>
</protein>
<gene>
    <name evidence="1" type="primary">bioB</name>
    <name type="ordered locus">DVU_2558</name>
</gene>
<reference key="1">
    <citation type="journal article" date="2004" name="Nat. Biotechnol.">
        <title>The genome sequence of the anaerobic, sulfate-reducing bacterium Desulfovibrio vulgaris Hildenborough.</title>
        <authorList>
            <person name="Heidelberg J.F."/>
            <person name="Seshadri R."/>
            <person name="Haveman S.A."/>
            <person name="Hemme C.L."/>
            <person name="Paulsen I.T."/>
            <person name="Kolonay J.F."/>
            <person name="Eisen J.A."/>
            <person name="Ward N.L."/>
            <person name="Methe B.A."/>
            <person name="Brinkac L.M."/>
            <person name="Daugherty S.C."/>
            <person name="DeBoy R.T."/>
            <person name="Dodson R.J."/>
            <person name="Durkin A.S."/>
            <person name="Madupu R."/>
            <person name="Nelson W.C."/>
            <person name="Sullivan S.A."/>
            <person name="Fouts D.E."/>
            <person name="Haft D.H."/>
            <person name="Selengut J."/>
            <person name="Peterson J.D."/>
            <person name="Davidsen T.M."/>
            <person name="Zafar N."/>
            <person name="Zhou L."/>
            <person name="Radune D."/>
            <person name="Dimitrov G."/>
            <person name="Hance M."/>
            <person name="Tran K."/>
            <person name="Khouri H.M."/>
            <person name="Gill J."/>
            <person name="Utterback T.R."/>
            <person name="Feldblyum T.V."/>
            <person name="Wall J.D."/>
            <person name="Voordouw G."/>
            <person name="Fraser C.M."/>
        </authorList>
    </citation>
    <scope>NUCLEOTIDE SEQUENCE [LARGE SCALE GENOMIC DNA]</scope>
    <source>
        <strain>ATCC 29579 / DSM 644 / CCUG 34227 / NCIMB 8303 / VKM B-1760 / Hildenborough</strain>
    </source>
</reference>
<name>BIOB_NITV2</name>
<sequence length="362" mass="38731">MHNLLENLRRRLLAQRTPEPLPPTSQGLARPSHDVVRGPCDADIPPDARNTMMPEGITVEEALAVAELPQKHALDILATAQAIRSVHKGGPAALCGIVNAKSGRCPEDCAFCAQSSHHATGSPVHALLDAETLLRRAEELRQSGAERYGIVTSGTRLTVRELATLCEAAVRIRRETGIALCGSLGQLTPDAAACLKEAGFSSYHHNLETSRSFFPAICSTHAYDDDIATVRAARAAGLRTCSGGIFGMGETDAQRIELSATLRELDVDSIPVNLLSPIPGTPLQHRPTMPPMRALVSIAIYRLMHPARDILVCGGREATLGPWQSWIFLAGANGMMVGNYLTTTGRDMADDLAMLATLGVRA</sequence>
<accession>Q728P5</accession>
<comment type="function">
    <text evidence="1">Catalyzes the conversion of dethiobiotin (DTB) to biotin by the insertion of a sulfur atom into dethiobiotin via a radical-based mechanism.</text>
</comment>
<comment type="catalytic activity">
    <reaction evidence="1">
        <text>(4R,5S)-dethiobiotin + (sulfur carrier)-SH + 2 reduced [2Fe-2S]-[ferredoxin] + 2 S-adenosyl-L-methionine = (sulfur carrier)-H + biotin + 2 5'-deoxyadenosine + 2 L-methionine + 2 oxidized [2Fe-2S]-[ferredoxin]</text>
        <dbReference type="Rhea" id="RHEA:22060"/>
        <dbReference type="Rhea" id="RHEA-COMP:10000"/>
        <dbReference type="Rhea" id="RHEA-COMP:10001"/>
        <dbReference type="Rhea" id="RHEA-COMP:14737"/>
        <dbReference type="Rhea" id="RHEA-COMP:14739"/>
        <dbReference type="ChEBI" id="CHEBI:17319"/>
        <dbReference type="ChEBI" id="CHEBI:29917"/>
        <dbReference type="ChEBI" id="CHEBI:33737"/>
        <dbReference type="ChEBI" id="CHEBI:33738"/>
        <dbReference type="ChEBI" id="CHEBI:57586"/>
        <dbReference type="ChEBI" id="CHEBI:57844"/>
        <dbReference type="ChEBI" id="CHEBI:59789"/>
        <dbReference type="ChEBI" id="CHEBI:64428"/>
        <dbReference type="ChEBI" id="CHEBI:149473"/>
        <dbReference type="EC" id="2.8.1.6"/>
    </reaction>
</comment>
<comment type="cofactor">
    <cofactor evidence="1">
        <name>[4Fe-4S] cluster</name>
        <dbReference type="ChEBI" id="CHEBI:49883"/>
    </cofactor>
    <text evidence="1">Binds 1 [4Fe-4S] cluster. The cluster is coordinated with 3 cysteines and an exchangeable S-adenosyl-L-methionine.</text>
</comment>
<comment type="cofactor">
    <cofactor evidence="1">
        <name>[2Fe-2S] cluster</name>
        <dbReference type="ChEBI" id="CHEBI:190135"/>
    </cofactor>
    <text evidence="1">Binds 1 [2Fe-2S] cluster. The cluster is coordinated with 3 cysteines and 1 arginine.</text>
</comment>
<comment type="pathway">
    <text evidence="1">Cofactor biosynthesis; biotin biosynthesis; biotin from 7,8-diaminononanoate: step 2/2.</text>
</comment>
<comment type="subunit">
    <text evidence="1">Homodimer.</text>
</comment>
<comment type="similarity">
    <text evidence="1">Belongs to the radical SAM superfamily. Biotin synthase family.</text>
</comment>
<comment type="sequence caution" evidence="4">
    <conflict type="erroneous initiation">
        <sequence resource="EMBL-CDS" id="AAS97030"/>
    </conflict>
</comment>
<evidence type="ECO:0000255" key="1">
    <source>
        <dbReference type="HAMAP-Rule" id="MF_01694"/>
    </source>
</evidence>
<evidence type="ECO:0000255" key="2">
    <source>
        <dbReference type="PROSITE-ProRule" id="PRU01266"/>
    </source>
</evidence>
<evidence type="ECO:0000256" key="3">
    <source>
        <dbReference type="SAM" id="MobiDB-lite"/>
    </source>
</evidence>
<evidence type="ECO:0000305" key="4"/>
<dbReference type="EC" id="2.8.1.6" evidence="1"/>
<dbReference type="EMBL" id="AE017285">
    <property type="protein sequence ID" value="AAS97030.1"/>
    <property type="status" value="ALT_INIT"/>
    <property type="molecule type" value="Genomic_DNA"/>
</dbReference>
<dbReference type="RefSeq" id="YP_011770.1">
    <property type="nucleotide sequence ID" value="NC_002937.3"/>
</dbReference>
<dbReference type="SMR" id="Q728P5"/>
<dbReference type="STRING" id="882.DVU_2558"/>
<dbReference type="PaxDb" id="882-DVU_2558"/>
<dbReference type="EnsemblBacteria" id="AAS97030">
    <property type="protein sequence ID" value="AAS97030"/>
    <property type="gene ID" value="DVU_2558"/>
</dbReference>
<dbReference type="KEGG" id="dvu:DVU_2558"/>
<dbReference type="PATRIC" id="fig|882.5.peg.2316"/>
<dbReference type="eggNOG" id="COG0502">
    <property type="taxonomic scope" value="Bacteria"/>
</dbReference>
<dbReference type="HOGENOM" id="CLU_033172_2_1_7"/>
<dbReference type="OrthoDB" id="9786826at2"/>
<dbReference type="UniPathway" id="UPA00078">
    <property type="reaction ID" value="UER00162"/>
</dbReference>
<dbReference type="Proteomes" id="UP000002194">
    <property type="component" value="Chromosome"/>
</dbReference>
<dbReference type="GO" id="GO:0051537">
    <property type="term" value="F:2 iron, 2 sulfur cluster binding"/>
    <property type="evidence" value="ECO:0007669"/>
    <property type="project" value="UniProtKB-KW"/>
</dbReference>
<dbReference type="GO" id="GO:0051539">
    <property type="term" value="F:4 iron, 4 sulfur cluster binding"/>
    <property type="evidence" value="ECO:0007669"/>
    <property type="project" value="UniProtKB-KW"/>
</dbReference>
<dbReference type="GO" id="GO:0004076">
    <property type="term" value="F:biotin synthase activity"/>
    <property type="evidence" value="ECO:0007669"/>
    <property type="project" value="UniProtKB-UniRule"/>
</dbReference>
<dbReference type="GO" id="GO:0005506">
    <property type="term" value="F:iron ion binding"/>
    <property type="evidence" value="ECO:0007669"/>
    <property type="project" value="UniProtKB-UniRule"/>
</dbReference>
<dbReference type="GO" id="GO:0009102">
    <property type="term" value="P:biotin biosynthetic process"/>
    <property type="evidence" value="ECO:0007669"/>
    <property type="project" value="UniProtKB-UniRule"/>
</dbReference>
<dbReference type="CDD" id="cd01335">
    <property type="entry name" value="Radical_SAM"/>
    <property type="match status" value="1"/>
</dbReference>
<dbReference type="Gene3D" id="3.20.20.70">
    <property type="entry name" value="Aldolase class I"/>
    <property type="match status" value="1"/>
</dbReference>
<dbReference type="HAMAP" id="MF_01694">
    <property type="entry name" value="BioB"/>
    <property type="match status" value="1"/>
</dbReference>
<dbReference type="InterPro" id="IPR013785">
    <property type="entry name" value="Aldolase_TIM"/>
</dbReference>
<dbReference type="InterPro" id="IPR010722">
    <property type="entry name" value="BATS_dom"/>
</dbReference>
<dbReference type="InterPro" id="IPR002684">
    <property type="entry name" value="Biotin_synth/BioAB"/>
</dbReference>
<dbReference type="InterPro" id="IPR024177">
    <property type="entry name" value="Biotin_synthase"/>
</dbReference>
<dbReference type="InterPro" id="IPR006638">
    <property type="entry name" value="Elp3/MiaA/NifB-like_rSAM"/>
</dbReference>
<dbReference type="InterPro" id="IPR007197">
    <property type="entry name" value="rSAM"/>
</dbReference>
<dbReference type="NCBIfam" id="TIGR00433">
    <property type="entry name" value="bioB"/>
    <property type="match status" value="1"/>
</dbReference>
<dbReference type="PANTHER" id="PTHR22976">
    <property type="entry name" value="BIOTIN SYNTHASE"/>
    <property type="match status" value="1"/>
</dbReference>
<dbReference type="PANTHER" id="PTHR22976:SF2">
    <property type="entry name" value="BIOTIN SYNTHASE, MITOCHONDRIAL"/>
    <property type="match status" value="1"/>
</dbReference>
<dbReference type="Pfam" id="PF06968">
    <property type="entry name" value="BATS"/>
    <property type="match status" value="1"/>
</dbReference>
<dbReference type="Pfam" id="PF04055">
    <property type="entry name" value="Radical_SAM"/>
    <property type="match status" value="1"/>
</dbReference>
<dbReference type="PIRSF" id="PIRSF001619">
    <property type="entry name" value="Biotin_synth"/>
    <property type="match status" value="1"/>
</dbReference>
<dbReference type="SFLD" id="SFLDG01060">
    <property type="entry name" value="BATS_domain_containing"/>
    <property type="match status" value="1"/>
</dbReference>
<dbReference type="SFLD" id="SFLDG01278">
    <property type="entry name" value="biotin_synthase_like"/>
    <property type="match status" value="1"/>
</dbReference>
<dbReference type="SMART" id="SM00876">
    <property type="entry name" value="BATS"/>
    <property type="match status" value="1"/>
</dbReference>
<dbReference type="SMART" id="SM00729">
    <property type="entry name" value="Elp3"/>
    <property type="match status" value="1"/>
</dbReference>
<dbReference type="SUPFAM" id="SSF102114">
    <property type="entry name" value="Radical SAM enzymes"/>
    <property type="match status" value="1"/>
</dbReference>
<dbReference type="PROSITE" id="PS51918">
    <property type="entry name" value="RADICAL_SAM"/>
    <property type="match status" value="1"/>
</dbReference>